<accession>Q3URU2</accession>
<accession>O54978</accession>
<accession>Q3TQ69</accession>
<accession>Q5EBP7</accession>
<accession>Q61138</accession>
<accession>Q6GQS0</accession>
<accession>Q80U47</accession>
<accession>Q8R5N0</accession>
<accession>Q9QX53</accession>
<proteinExistence type="evidence at protein level"/>
<protein>
    <recommendedName>
        <fullName>Paternally-expressed gene 3 protein</fullName>
    </recommendedName>
    <alternativeName>
        <fullName>ASF-1</fullName>
    </alternativeName>
</protein>
<sequence>MYHHEDDTNSDMNSDDDMSRSGRETPPPRPSHAFGSERDLERRGRSRDVEPRDRWPYTRNPRSRLPQRDLSLPVMSRPHFGLDRDDDRRSMDYESRSQDAESYQNVVELKEDKKPQNPIQDNLENYRKLLSLGVQLAEDDRHSHMTQGHSSRSKRTAYPSTSRGLKPMPEAKKPSHRRGICEDESSHGVIMEKFIKDVARNPKSGRARELNERPPPRFPRPNDNWKDSSSSRRESVIQERGYEGSAFRGGFRFNADLASRSRALERKRRYHFDSDERGSGHEHKSCVRKKPFECGAEMRQAMSMGNLNSPSFSESQSIDFGANPYVCDECGRQFSVISEFVEHQIMHTRENLYEYGESFIHSVAVNEVQKGQGGGKRFECKECGETFSRSAALAEHRQIHAREYLAECRDQEDEETIMPSPTFSELQKMYGKDKFYECKVCKETFLHSSALIEHQKIHGRGNSDDRDNERERERDRLRARAREQRERERERERERELGEPFLTCPNFNEFRKMYRKDKIYECKVCGESFLHLSSLREHQKIHTRGNPFENKSRMCEETFVPSQSLRRRQKTYREKLFDFNNARDALMGNSDSSEHQKNRSRRNFFEGRGFEKPFVESQKSHTITRPPENKDDDKPFTISVNPNDKLKFPIMENGSQGKSYERSVIHSLGSAEAQKSHGGLGFSKPRPVAESSTQSSSSIYYPRAHSGGNTYEGKEYKDSIIHSLPAPRPLKRHRANDHIQCDEGGESSIYIPDIINKGRKIPAREDAYEGSSSSNYHTPNVSRAEPPSLSGESHDSKQDVTFSVPSSSVREHQKARAKKKYIEPRNNETSVIHSLPFGELLAGHRRAKFFECQECGEAFARRSELIEHQKIHDRERPSGSRHYERSVIRSLAPSDPQTSYAQERFIQEQVRKFRAFGQRSTTSNNLSVQKIYAQETFNAEEPHDKETHGQKIHDKEPYGKEPSGKEPHGDEPQDKEPLDQEMRSEEPHDDKPHGQEPHDDKPHGQEPHDDKPHGQEPHGDEPHGQEPHGDEPHDKEPIDQEMRSEEPHSEESHGDEPHGEESHGQEKVEDATIQASVSEEHQKDDAGDAIYECQDCGLGFTDLNDLTSHQDTHSRKALVDSREYAHSEVHAHSVSEFEKKCSGEKLYECPKCGESFIHSSLLFEHQRVHEQDQLYSVKACDDAFIALLPVRPRRNCTVERNPAVSGSAIRCRQCGQGFIHSSALNEHMRQHRDNEIMEQSELSDEIFIQGLALTEYQGSETEEKLFECTICGECFFTAKQLGDHHTKVHKDEPYEYGPSYTHASFLTEPLRKHIPLYECKDCGQSFLDDTVIAERMVFHPEREGGSEIVAATAQEVEANVLIPQEVLRIQGSNAEAAEPEVEAAEPEVEAAEPEVEAAEPNGEAEGPDGEAAEPDGEAEQPNGEAEQPNGDADEPDGAGIEDPEERADEPEEDVEEPEGDADEPDGADIEDPEEEGEDQEIEVEEPYYNCHECAETFASSSAFGEHLKSHASVIIFEPANAPGECSGYIERASTSAGGAEQADDKYFKCDVCGQLFNDRLSLARHQNSHTG</sequence>
<feature type="chain" id="PRO_0000249229" description="Paternally-expressed gene 3 protein">
    <location>
        <begin position="1"/>
        <end position="1571"/>
    </location>
</feature>
<feature type="repeat" description="1-1">
    <location>
        <begin position="942"/>
        <end position="946"/>
    </location>
</feature>
<feature type="repeat" description="1-2">
    <location>
        <begin position="967"/>
        <end position="971"/>
    </location>
</feature>
<feature type="repeat" description="2-1">
    <location>
        <begin position="987"/>
        <end position="991"/>
    </location>
</feature>
<feature type="repeat" description="1-3">
    <location>
        <begin position="992"/>
        <end position="996"/>
    </location>
</feature>
<feature type="repeat" description="2-2">
    <location>
        <begin position="997"/>
        <end position="1001"/>
    </location>
</feature>
<feature type="repeat" description="1-4">
    <location>
        <begin position="1002"/>
        <end position="1006"/>
    </location>
</feature>
<feature type="repeat" description="2-3">
    <location>
        <begin position="1007"/>
        <end position="1011"/>
    </location>
</feature>
<feature type="repeat" description="1-5">
    <location>
        <begin position="1012"/>
        <end position="1016"/>
    </location>
</feature>
<feature type="repeat" description="1-6">
    <location>
        <begin position="1017"/>
        <end position="1021"/>
    </location>
</feature>
<feature type="repeat" description="1-7">
    <location>
        <begin position="1022"/>
        <end position="1026"/>
    </location>
</feature>
<feature type="repeat" description="1-8">
    <location>
        <begin position="1027"/>
        <end position="1031"/>
    </location>
</feature>
<feature type="repeat" description="1-9">
    <location>
        <begin position="1032"/>
        <end position="1036"/>
    </location>
</feature>
<feature type="repeat" description="1-10">
    <location>
        <begin position="1047"/>
        <end position="1051"/>
    </location>
</feature>
<feature type="zinc finger region" description="C2H2-type 1" evidence="2">
    <location>
        <begin position="325"/>
        <end position="347"/>
    </location>
</feature>
<feature type="zinc finger region" description="C2H2-type 2" evidence="2">
    <location>
        <begin position="378"/>
        <end position="400"/>
    </location>
</feature>
<feature type="zinc finger region" description="C2H2-type 3" evidence="2">
    <location>
        <begin position="436"/>
        <end position="458"/>
    </location>
</feature>
<feature type="zinc finger region" description="C2H2-type 4" evidence="2">
    <location>
        <begin position="520"/>
        <end position="542"/>
    </location>
</feature>
<feature type="zinc finger region" description="C2H2-type 5" evidence="2">
    <location>
        <begin position="850"/>
        <end position="872"/>
    </location>
</feature>
<feature type="zinc finger region" description="C2H2-type 6" evidence="2">
    <location>
        <begin position="1091"/>
        <end position="1113"/>
    </location>
</feature>
<feature type="zinc finger region" description="C2H2-type 7" evidence="2">
    <location>
        <begin position="1147"/>
        <end position="1169"/>
    </location>
</feature>
<feature type="zinc finger region" description="C2H2-type 8" evidence="2">
    <location>
        <begin position="1209"/>
        <end position="1231"/>
    </location>
</feature>
<feature type="zinc finger region" description="C2H2-type 9" evidence="2">
    <location>
        <begin position="1266"/>
        <end position="1289"/>
    </location>
</feature>
<feature type="zinc finger region" description="C2H2-type 10; degenerate" evidence="2">
    <location>
        <begin position="1317"/>
        <end position="1339"/>
    </location>
</feature>
<feature type="zinc finger region" description="C2H2-type 11" evidence="2">
    <location>
        <begin position="1488"/>
        <end position="1510"/>
    </location>
</feature>
<feature type="zinc finger region" description="C2H2-type 12" evidence="2">
    <location>
        <begin position="1547"/>
        <end position="1569"/>
    </location>
</feature>
<feature type="region of interest" description="Disordered" evidence="3">
    <location>
        <begin position="1"/>
        <end position="120"/>
    </location>
</feature>
<feature type="region of interest" description="Disordered" evidence="3">
    <location>
        <begin position="137"/>
        <end position="241"/>
    </location>
</feature>
<feature type="region of interest" description="10 X 5 AA repeat of P-H-X-X-E">
    <location>
        <begin position="199"/>
        <end position="265"/>
    </location>
</feature>
<feature type="region of interest" description="3 X 5 AA repeat of P-H-D-D-K">
    <location>
        <begin position="199"/>
        <end position="265"/>
    </location>
</feature>
<feature type="region of interest" description="Disordered" evidence="3">
    <location>
        <begin position="456"/>
        <end position="495"/>
    </location>
</feature>
<feature type="region of interest" description="Disordered" evidence="3">
    <location>
        <begin position="585"/>
        <end position="649"/>
    </location>
</feature>
<feature type="region of interest" description="Disordered" evidence="3">
    <location>
        <begin position="672"/>
        <end position="713"/>
    </location>
</feature>
<feature type="region of interest" description="Disordered" evidence="3">
    <location>
        <begin position="764"/>
        <end position="820"/>
    </location>
</feature>
<feature type="region of interest" description="Disordered" evidence="3">
    <location>
        <begin position="937"/>
        <end position="1070"/>
    </location>
</feature>
<feature type="region of interest" description="Disordered" evidence="3">
    <location>
        <begin position="1373"/>
        <end position="1487"/>
    </location>
</feature>
<feature type="compositionally biased region" description="Basic and acidic residues" evidence="3">
    <location>
        <begin position="35"/>
        <end position="56"/>
    </location>
</feature>
<feature type="compositionally biased region" description="Basic and acidic residues" evidence="3">
    <location>
        <begin position="80"/>
        <end position="99"/>
    </location>
</feature>
<feature type="compositionally biased region" description="Basic and acidic residues" evidence="3">
    <location>
        <begin position="169"/>
        <end position="186"/>
    </location>
</feature>
<feature type="compositionally biased region" description="Basic and acidic residues" evidence="3">
    <location>
        <begin position="193"/>
        <end position="215"/>
    </location>
</feature>
<feature type="compositionally biased region" description="Basic and acidic residues" evidence="3">
    <location>
        <begin position="223"/>
        <end position="241"/>
    </location>
</feature>
<feature type="compositionally biased region" description="Basic and acidic residues" evidence="3">
    <location>
        <begin position="592"/>
        <end position="614"/>
    </location>
</feature>
<feature type="compositionally biased region" description="Polar residues" evidence="3">
    <location>
        <begin position="770"/>
        <end position="781"/>
    </location>
</feature>
<feature type="compositionally biased region" description="Polar residues" evidence="3">
    <location>
        <begin position="799"/>
        <end position="808"/>
    </location>
</feature>
<feature type="compositionally biased region" description="Basic and acidic residues" evidence="3">
    <location>
        <begin position="809"/>
        <end position="820"/>
    </location>
</feature>
<feature type="compositionally biased region" description="Basic and acidic residues" evidence="3">
    <location>
        <begin position="940"/>
        <end position="1070"/>
    </location>
</feature>
<feature type="compositionally biased region" description="Acidic residues" evidence="3">
    <location>
        <begin position="1377"/>
        <end position="1397"/>
    </location>
</feature>
<feature type="compositionally biased region" description="Acidic residues" evidence="3">
    <location>
        <begin position="1405"/>
        <end position="1418"/>
    </location>
</feature>
<feature type="compositionally biased region" description="Acidic residues" evidence="3">
    <location>
        <begin position="1431"/>
        <end position="1485"/>
    </location>
</feature>
<feature type="splice variant" id="VSP_020375" description="In isoform 2." evidence="12">
    <location>
        <begin position="989"/>
        <end position="1048"/>
    </location>
</feature>
<feature type="splice variant" id="VSP_020376" description="In isoform 2." evidence="12">
    <original>PAVSGSAIRCRQCGQGFIHSSALNEHMRQHRDNEIMEQSELSDEIFIQGLALT</original>
    <variation>ASSLPNSSGTTTPKFTRMSPMSMGPPTPMPPFSPSPSGSTSHCTNAKIAASPS</variation>
    <location>
        <begin position="1202"/>
        <end position="1254"/>
    </location>
</feature>
<feature type="splice variant" id="VSP_020377" description="In isoform 2." evidence="12">
    <location>
        <begin position="1255"/>
        <end position="1571"/>
    </location>
</feature>
<feature type="sequence conflict" description="In Ref. 1 and 2." evidence="13" ref="1 2">
    <original>E</original>
    <variation>G</variation>
    <location>
        <position position="5"/>
    </location>
</feature>
<feature type="sequence conflict" description="In Ref. 1; AAB96922." evidence="13" ref="1">
    <original>T</original>
    <variation>A</variation>
    <location>
        <position position="156"/>
    </location>
</feature>
<feature type="sequence conflict" description="In Ref. 2; BAB85589." evidence="13" ref="2">
    <original>G</original>
    <variation>W</variation>
    <location>
        <position position="321"/>
    </location>
</feature>
<feature type="sequence conflict" description="In Ref. 6." evidence="13" ref="6">
    <original>N</original>
    <variation>T</variation>
    <location>
        <position position="351"/>
    </location>
</feature>
<feature type="sequence conflict" description="In Ref. 1 and 2." evidence="13" ref="1 2">
    <original>KG</original>
    <variation>RS</variation>
    <location>
        <begin position="370"/>
        <end position="371"/>
    </location>
</feature>
<feature type="sequence conflict" description="In Ref. 2; BAB85589." evidence="13" ref="2">
    <original>E</original>
    <variation>V</variation>
    <location>
        <position position="382"/>
    </location>
</feature>
<feature type="sequence conflict" description="In Ref. 7." evidence="13" ref="7">
    <original>E</original>
    <variation>R</variation>
    <location>
        <position position="403"/>
    </location>
</feature>
<feature type="sequence conflict" description="In Ref. 7." evidence="13" ref="7">
    <location>
        <begin position="567"/>
        <end position="568"/>
    </location>
</feature>
<feature type="sequence conflict" description="In Ref. 2; BAB85589." evidence="13" ref="2">
    <original>K</original>
    <variation>E</variation>
    <location>
        <position position="570"/>
    </location>
</feature>
<feature type="sequence conflict" description="In Ref. 2; BAB85589." evidence="13" ref="2">
    <original>R</original>
    <variation>G</variation>
    <location>
        <position position="608"/>
    </location>
</feature>
<feature type="sequence conflict" description="In Ref. 2; BAB85589." evidence="13" ref="2">
    <original>F</original>
    <variation>S</variation>
    <location>
        <position position="614"/>
    </location>
</feature>
<feature type="sequence conflict" description="In Ref. 2; BAB85589." evidence="13" ref="2">
    <original>K</original>
    <variation>E</variation>
    <location>
        <position position="645"/>
    </location>
</feature>
<feature type="sequence conflict" description="In Ref. 1; AAB96922." evidence="13" ref="1">
    <original>F</original>
    <variation>L</variation>
    <location>
        <position position="648"/>
    </location>
</feature>
<feature type="sequence conflict" description="In Ref. 1; AAB96922." evidence="13" ref="1">
    <original>Y</original>
    <variation>C</variation>
    <location>
        <position position="660"/>
    </location>
</feature>
<feature type="sequence conflict" description="In Ref. 7." evidence="13" ref="7">
    <original>G</original>
    <variation>A</variation>
    <location>
        <position position="669"/>
    </location>
</feature>
<feature type="sequence conflict" description="In Ref. 7." evidence="13" ref="7">
    <original>E</original>
    <variation>K</variation>
    <location>
        <position position="712"/>
    </location>
</feature>
<feature type="sequence conflict" description="In Ref. 2; BAB85589." evidence="13" ref="2">
    <original>ND</original>
    <variation>MN</variation>
    <location>
        <begin position="736"/>
        <end position="737"/>
    </location>
</feature>
<feature type="sequence conflict" description="In Ref. 7." evidence="13" ref="7">
    <original>G</original>
    <variation>R</variation>
    <location>
        <position position="856"/>
    </location>
</feature>
<feature type="sequence conflict" description="In Ref. 1; AAB96922." evidence="13" ref="1">
    <original>D</original>
    <variation>V</variation>
    <location>
        <position position="979"/>
    </location>
</feature>
<feature type="sequence conflict" description="In Ref. 7." evidence="13" ref="7">
    <original>K</original>
    <variation>E</variation>
    <location>
        <position position="1011"/>
    </location>
</feature>
<feature type="sequence conflict" description="In Ref. 5; AAH89344." evidence="13" ref="5">
    <original>E</original>
    <variation>Q</variation>
    <location>
        <position position="1051"/>
    </location>
</feature>
<feature type="sequence conflict" description="In Ref. 7." evidence="13" ref="7">
    <original>E</original>
    <variation>G</variation>
    <location>
        <position position="1123"/>
    </location>
</feature>
<feature type="sequence conflict" description="In Ref. 3; BAC65520." evidence="13" ref="3">
    <location>
        <position position="1171"/>
    </location>
</feature>
<feature type="sequence conflict" description="In Ref. 1 and 2." evidence="13" ref="1 2">
    <original>D</original>
    <variation>Y</variation>
    <location>
        <position position="1181"/>
    </location>
</feature>
<feature type="sequence conflict" description="In Ref. 1 and 2." evidence="13" ref="1 2">
    <original>N</original>
    <variation>I</variation>
    <location>
        <position position="1401"/>
    </location>
</feature>
<reference key="1">
    <citation type="journal article" date="1996" name="Nat. Genet.">
        <title>Peg3 imprinted gene on proximal chromosome 7 encodes for a zinc finger protein.</title>
        <authorList>
            <person name="Kuroiwa Y."/>
            <person name="Kaneko-Ishino T."/>
            <person name="Kagitani F."/>
            <person name="Kohda T."/>
            <person name="Li L.-L."/>
            <person name="Tada M."/>
            <person name="Suzuki R."/>
            <person name="Yokoyama M."/>
            <person name="Shiroishi T."/>
            <person name="Wakana S."/>
            <person name="Barton S.C."/>
            <person name="Ishino F."/>
            <person name="Surani M.A."/>
        </authorList>
    </citation>
    <scope>NUCLEOTIDE SEQUENCE [MRNA] (ISOFORM 1)</scope>
    <scope>TISSUE SPECIFICITY</scope>
    <scope>DEVELOPMENTAL STAGE</scope>
</reference>
<reference key="2">
    <citation type="journal article" date="2001" name="Genes Cells">
        <title>Tumour suppressor activity of human imprinted gene PEG3 in a glioma cell line.</title>
        <authorList>
            <person name="Kohda T."/>
            <person name="Asai A."/>
            <person name="Kuroiwa Y."/>
            <person name="Kobayashi S."/>
            <person name="Aisaka K."/>
            <person name="Nagashima G."/>
            <person name="Yoshida M.C."/>
            <person name="Kondo Y."/>
            <person name="Kagiyama N."/>
            <person name="Kirino T."/>
            <person name="Kaneko-Ishino T."/>
            <person name="Ishino F."/>
        </authorList>
    </citation>
    <scope>NUCLEOTIDE SEQUENCE [MRNA] (ISOFORM 1)</scope>
    <scope>SUBCELLULAR LOCATION</scope>
    <scope>TISSUE SPECIFICITY</scope>
    <source>
        <strain>B6C3H F1</strain>
    </source>
</reference>
<reference key="3">
    <citation type="journal article" date="2003" name="DNA Res.">
        <title>Prediction of the coding sequences of mouse homologues of KIAA gene: II. The complete nucleotide sequences of 400 mouse KIAA-homologous cDNAs identified by screening of terminal sequences of cDNA clones randomly sampled from size-fractionated libraries.</title>
        <authorList>
            <person name="Okazaki N."/>
            <person name="Kikuno R."/>
            <person name="Ohara R."/>
            <person name="Inamoto S."/>
            <person name="Aizawa H."/>
            <person name="Yuasa S."/>
            <person name="Nakajima D."/>
            <person name="Nagase T."/>
            <person name="Ohara O."/>
            <person name="Koga H."/>
        </authorList>
    </citation>
    <scope>NUCLEOTIDE SEQUENCE [LARGE SCALE MRNA] (ISOFORM 1)</scope>
    <source>
        <tissue>Brain</tissue>
    </source>
</reference>
<reference key="4">
    <citation type="journal article" date="2005" name="Science">
        <title>The transcriptional landscape of the mammalian genome.</title>
        <authorList>
            <person name="Carninci P."/>
            <person name="Kasukawa T."/>
            <person name="Katayama S."/>
            <person name="Gough J."/>
            <person name="Frith M.C."/>
            <person name="Maeda N."/>
            <person name="Oyama R."/>
            <person name="Ravasi T."/>
            <person name="Lenhard B."/>
            <person name="Wells C."/>
            <person name="Kodzius R."/>
            <person name="Shimokawa K."/>
            <person name="Bajic V.B."/>
            <person name="Brenner S.E."/>
            <person name="Batalov S."/>
            <person name="Forrest A.R."/>
            <person name="Zavolan M."/>
            <person name="Davis M.J."/>
            <person name="Wilming L.G."/>
            <person name="Aidinis V."/>
            <person name="Allen J.E."/>
            <person name="Ambesi-Impiombato A."/>
            <person name="Apweiler R."/>
            <person name="Aturaliya R.N."/>
            <person name="Bailey T.L."/>
            <person name="Bansal M."/>
            <person name="Baxter L."/>
            <person name="Beisel K.W."/>
            <person name="Bersano T."/>
            <person name="Bono H."/>
            <person name="Chalk A.M."/>
            <person name="Chiu K.P."/>
            <person name="Choudhary V."/>
            <person name="Christoffels A."/>
            <person name="Clutterbuck D.R."/>
            <person name="Crowe M.L."/>
            <person name="Dalla E."/>
            <person name="Dalrymple B.P."/>
            <person name="de Bono B."/>
            <person name="Della Gatta G."/>
            <person name="di Bernardo D."/>
            <person name="Down T."/>
            <person name="Engstrom P."/>
            <person name="Fagiolini M."/>
            <person name="Faulkner G."/>
            <person name="Fletcher C.F."/>
            <person name="Fukushima T."/>
            <person name="Furuno M."/>
            <person name="Futaki S."/>
            <person name="Gariboldi M."/>
            <person name="Georgii-Hemming P."/>
            <person name="Gingeras T.R."/>
            <person name="Gojobori T."/>
            <person name="Green R.E."/>
            <person name="Gustincich S."/>
            <person name="Harbers M."/>
            <person name="Hayashi Y."/>
            <person name="Hensch T.K."/>
            <person name="Hirokawa N."/>
            <person name="Hill D."/>
            <person name="Huminiecki L."/>
            <person name="Iacono M."/>
            <person name="Ikeo K."/>
            <person name="Iwama A."/>
            <person name="Ishikawa T."/>
            <person name="Jakt M."/>
            <person name="Kanapin A."/>
            <person name="Katoh M."/>
            <person name="Kawasawa Y."/>
            <person name="Kelso J."/>
            <person name="Kitamura H."/>
            <person name="Kitano H."/>
            <person name="Kollias G."/>
            <person name="Krishnan S.P."/>
            <person name="Kruger A."/>
            <person name="Kummerfeld S.K."/>
            <person name="Kurochkin I.V."/>
            <person name="Lareau L.F."/>
            <person name="Lazarevic D."/>
            <person name="Lipovich L."/>
            <person name="Liu J."/>
            <person name="Liuni S."/>
            <person name="McWilliam S."/>
            <person name="Madan Babu M."/>
            <person name="Madera M."/>
            <person name="Marchionni L."/>
            <person name="Matsuda H."/>
            <person name="Matsuzawa S."/>
            <person name="Miki H."/>
            <person name="Mignone F."/>
            <person name="Miyake S."/>
            <person name="Morris K."/>
            <person name="Mottagui-Tabar S."/>
            <person name="Mulder N."/>
            <person name="Nakano N."/>
            <person name="Nakauchi H."/>
            <person name="Ng P."/>
            <person name="Nilsson R."/>
            <person name="Nishiguchi S."/>
            <person name="Nishikawa S."/>
            <person name="Nori F."/>
            <person name="Ohara O."/>
            <person name="Okazaki Y."/>
            <person name="Orlando V."/>
            <person name="Pang K.C."/>
            <person name="Pavan W.J."/>
            <person name="Pavesi G."/>
            <person name="Pesole G."/>
            <person name="Petrovsky N."/>
            <person name="Piazza S."/>
            <person name="Reed J."/>
            <person name="Reid J.F."/>
            <person name="Ring B.Z."/>
            <person name="Ringwald M."/>
            <person name="Rost B."/>
            <person name="Ruan Y."/>
            <person name="Salzberg S.L."/>
            <person name="Sandelin A."/>
            <person name="Schneider C."/>
            <person name="Schoenbach C."/>
            <person name="Sekiguchi K."/>
            <person name="Semple C.A."/>
            <person name="Seno S."/>
            <person name="Sessa L."/>
            <person name="Sheng Y."/>
            <person name="Shibata Y."/>
            <person name="Shimada H."/>
            <person name="Shimada K."/>
            <person name="Silva D."/>
            <person name="Sinclair B."/>
            <person name="Sperling S."/>
            <person name="Stupka E."/>
            <person name="Sugiura K."/>
            <person name="Sultana R."/>
            <person name="Takenaka Y."/>
            <person name="Taki K."/>
            <person name="Tammoja K."/>
            <person name="Tan S.L."/>
            <person name="Tang S."/>
            <person name="Taylor M.S."/>
            <person name="Tegner J."/>
            <person name="Teichmann S.A."/>
            <person name="Ueda H.R."/>
            <person name="van Nimwegen E."/>
            <person name="Verardo R."/>
            <person name="Wei C.L."/>
            <person name="Yagi K."/>
            <person name="Yamanishi H."/>
            <person name="Zabarovsky E."/>
            <person name="Zhu S."/>
            <person name="Zimmer A."/>
            <person name="Hide W."/>
            <person name="Bult C."/>
            <person name="Grimmond S.M."/>
            <person name="Teasdale R.D."/>
            <person name="Liu E.T."/>
            <person name="Brusic V."/>
            <person name="Quackenbush J."/>
            <person name="Wahlestedt C."/>
            <person name="Mattick J.S."/>
            <person name="Hume D.A."/>
            <person name="Kai C."/>
            <person name="Sasaki D."/>
            <person name="Tomaru Y."/>
            <person name="Fukuda S."/>
            <person name="Kanamori-Katayama M."/>
            <person name="Suzuki M."/>
            <person name="Aoki J."/>
            <person name="Arakawa T."/>
            <person name="Iida J."/>
            <person name="Imamura K."/>
            <person name="Itoh M."/>
            <person name="Kato T."/>
            <person name="Kawaji H."/>
            <person name="Kawagashira N."/>
            <person name="Kawashima T."/>
            <person name="Kojima M."/>
            <person name="Kondo S."/>
            <person name="Konno H."/>
            <person name="Nakano K."/>
            <person name="Ninomiya N."/>
            <person name="Nishio T."/>
            <person name="Okada M."/>
            <person name="Plessy C."/>
            <person name="Shibata K."/>
            <person name="Shiraki T."/>
            <person name="Suzuki S."/>
            <person name="Tagami M."/>
            <person name="Waki K."/>
            <person name="Watahiki A."/>
            <person name="Okamura-Oho Y."/>
            <person name="Suzuki H."/>
            <person name="Kawai J."/>
            <person name="Hayashizaki Y."/>
        </authorList>
    </citation>
    <scope>NUCLEOTIDE SEQUENCE [LARGE SCALE MRNA] (ISOFORM 1)</scope>
    <source>
        <strain>C57BL/6J</strain>
        <tissue>Head</tissue>
    </source>
</reference>
<reference key="5">
    <citation type="journal article" date="2004" name="Genome Res.">
        <title>The status, quality, and expansion of the NIH full-length cDNA project: the Mammalian Gene Collection (MGC).</title>
        <authorList>
            <consortium name="The MGC Project Team"/>
        </authorList>
    </citation>
    <scope>NUCLEOTIDE SEQUENCE [LARGE SCALE MRNA] (ISOFORMS 1 AND 2)</scope>
    <source>
        <strain>C57BL/6J</strain>
        <tissue>Brain</tissue>
        <tissue>Head</tissue>
    </source>
</reference>
<reference key="6">
    <citation type="journal article" date="2000" name="Genomics">
        <title>Organization and parent-of-origin-specific methylation of imprinted Peg3 gene on mouse proximal chromosome 7.</title>
        <authorList>
            <person name="Li L.-L."/>
            <person name="Szeto I.Y.-Y."/>
            <person name="Cattanach B.M."/>
            <person name="Ishino F."/>
            <person name="Surani M.A."/>
        </authorList>
    </citation>
    <scope>NUCLEOTIDE SEQUENCE [GENOMIC DNA] OF 1-352 (ISOFORM 1)</scope>
</reference>
<reference key="7">
    <citation type="journal article" date="1996" name="Dev. Biol.">
        <title>Pw1, a novel zinc finger gene implicated in the myogenic and neuronal lineages.</title>
        <authorList>
            <person name="Relaix F."/>
            <person name="Weng X."/>
            <person name="Marazzi G."/>
            <person name="Yang E."/>
            <person name="Copeland N.G."/>
            <person name="Jenkins N."/>
            <person name="Spence S.E."/>
            <person name="Sassoon D."/>
        </authorList>
    </citation>
    <scope>NUCLEOTIDE SEQUENCE [GENOMIC DNA] OF 191-1571 (ISOFORM 1)</scope>
    <scope>SUBCELLULAR LOCATION</scope>
    <scope>SUBUNIT</scope>
    <scope>TISSUE SPECIFICITY</scope>
    <scope>DEVELOPMENTAL STAGE</scope>
    <source>
        <strain>129/Sv</strain>
        <tissue>Limb bud</tissue>
    </source>
</reference>
<reference key="8">
    <citation type="journal article" date="1998" name="Nat. Genet.">
        <title>Peg3/Pw1 is an imprinted gene involved in the TNF-NFkappaB signal transduction pathway.</title>
        <authorList>
            <person name="Relaix F."/>
            <person name="Wei X.-J."/>
            <person name="Wu X."/>
            <person name="Sassoon D.A."/>
        </authorList>
    </citation>
    <scope>FUNCTION</scope>
    <scope>INTERACTION WITH TRAF2</scope>
</reference>
<reference key="9">
    <citation type="journal article" date="1999" name="Science">
        <title>Regulation of maternal behavior and offspring growth by paternally expressed Peg3.</title>
        <authorList>
            <person name="Li L.-L."/>
            <person name="Keverne E.B."/>
            <person name="Aparicio S.A."/>
            <person name="Ishino F."/>
            <person name="Barton S.C."/>
            <person name="Surani M.A."/>
        </authorList>
    </citation>
    <scope>FUNCTION</scope>
</reference>
<reference key="10">
    <citation type="journal article" date="2000" name="Proc. Natl. Acad. Sci. U.S.A.">
        <title>Pw1/Peg3 is a potential cell death mediator and cooperates with Siah1a in p53-mediated apoptosis.</title>
        <authorList>
            <person name="Relaix F."/>
            <person name="Wei X."/>
            <person name="Li W."/>
            <person name="Pan J."/>
            <person name="Lin Y."/>
            <person name="Bowtell D.D."/>
            <person name="Sassoon D.A."/>
            <person name="Wu X."/>
        </authorList>
    </citation>
    <scope>FUNCTION</scope>
    <scope>INDUCTION</scope>
    <scope>INTERACTION WITH SIAH1A AND SIAH2</scope>
</reference>
<reference key="11">
    <citation type="journal article" date="2001" name="Hum. Mol. Genet.">
        <title>Paternal monoallelic expression of PEG3 in the human placenta.</title>
        <authorList>
            <person name="Hiby S.E."/>
            <person name="Lough M."/>
            <person name="Keverne E.B."/>
            <person name="Surani M.A."/>
            <person name="Loke Y.W."/>
            <person name="King A."/>
        </authorList>
    </citation>
    <scope>TISSUE SPECIFICITY</scope>
</reference>
<reference key="12">
    <citation type="journal article" date="2002" name="J. Biol. Chem.">
        <title>Peg3/Pw1 is a mediator between p53 and Bax in DNA damage-induced neuronal death.</title>
        <authorList>
            <person name="Johnson M.D."/>
            <person name="Wu X."/>
            <person name="Aithmitti N."/>
            <person name="Morrison R.S."/>
        </authorList>
    </citation>
    <scope>FUNCTION</scope>
    <scope>INDUCTION</scope>
</reference>
<comment type="function">
    <text evidence="4 5 8 11">Induces apoptosis in cooperation with SIAH1A. Acts as a mediator between p53/TP53 and BAX in a neuronal death pathway that is activated by DNA damage. Acts synergistically with TRAF2 and inhibits TNF induced apoptosis through activation of NF-kappa-B. Plays a role in regulating maternal behavior and offspring growth.</text>
</comment>
<comment type="subunit">
    <text evidence="5 10 11">Homodimer. Interacts with SIAH1A and SIAH2. Interacts with TRAF2.</text>
</comment>
<comment type="subcellular location">
    <subcellularLocation>
        <location>Nucleus</location>
    </subcellularLocation>
    <subcellularLocation>
        <location>Cytoplasm</location>
    </subcellularLocation>
</comment>
<comment type="alternative products">
    <event type="alternative splicing"/>
    <isoform>
        <id>Q3URU2-1</id>
        <name>1</name>
        <sequence type="displayed"/>
    </isoform>
    <isoform>
        <id>Q3URU2-2</id>
        <name>2</name>
        <sequence type="described" ref="VSP_020375 VSP_020376 VSP_020377"/>
    </isoform>
</comment>
<comment type="tissue specificity">
    <text evidence="6 7 9 10">Brain, glial cells, neurons, skeletal muscle, uterus and placenta. In the placenta it is found in all trophoblast cells.</text>
</comment>
<comment type="developmental stage">
    <text evidence="9 10">Strongly expressed upon gastrulation and subsequently becomes restricted to skeletal muscle and subregions of the CNS. At 9.5 dpc, expressed in the branchial arches, somites and gut but little in the heart and neural tissues. At 12.5 dpc strongly expressed in the cranial skeleton, tongue, vertebral cartilage, pituitary and the luminal epithelium.</text>
</comment>
<comment type="induction">
    <text evidence="5 8">Induced during p53/TP53 mediated apoptosis. Up-regulated by DNA damage in cortical neurons in the presence of p53/TP53.</text>
</comment>
<comment type="domain">
    <text evidence="1">The SCAN domain enables PEG3 homo- or heterodimerization to control gene expression in a combinatorial fashion.</text>
</comment>
<comment type="similarity">
    <text evidence="13">Belongs to the krueppel C2H2-type zinc-finger protein family.</text>
</comment>
<comment type="sequence caution" evidence="13">
    <conflict type="frameshift">
        <sequence resource="EMBL-CDS" id="AAC52770"/>
    </conflict>
</comment>
<comment type="sequence caution" evidence="13">
    <conflict type="frameshift">
        <sequence resource="EMBL-CDS" id="BAB85589"/>
    </conflict>
</comment>
<comment type="sequence caution" evidence="13">
    <conflict type="erroneous initiation">
        <sequence resource="EMBL-CDS" id="BAC65520"/>
    </conflict>
</comment>
<name>PEG3_MOUSE</name>
<organism>
    <name type="scientific">Mus musculus</name>
    <name type="common">Mouse</name>
    <dbReference type="NCBI Taxonomy" id="10090"/>
    <lineage>
        <taxon>Eukaryota</taxon>
        <taxon>Metazoa</taxon>
        <taxon>Chordata</taxon>
        <taxon>Craniata</taxon>
        <taxon>Vertebrata</taxon>
        <taxon>Euteleostomi</taxon>
        <taxon>Mammalia</taxon>
        <taxon>Eutheria</taxon>
        <taxon>Euarchontoglires</taxon>
        <taxon>Glires</taxon>
        <taxon>Rodentia</taxon>
        <taxon>Myomorpha</taxon>
        <taxon>Muroidea</taxon>
        <taxon>Muridae</taxon>
        <taxon>Murinae</taxon>
        <taxon>Mus</taxon>
        <taxon>Mus</taxon>
    </lineage>
</organism>
<dbReference type="EMBL" id="AF038939">
    <property type="protein sequence ID" value="AAB96922.1"/>
    <property type="molecule type" value="mRNA"/>
</dbReference>
<dbReference type="EMBL" id="AB003040">
    <property type="protein sequence ID" value="BAB85589.1"/>
    <property type="status" value="ALT_FRAME"/>
    <property type="molecule type" value="mRNA"/>
</dbReference>
<dbReference type="EMBL" id="AK141217">
    <property type="protein sequence ID" value="BAE24595.1"/>
    <property type="molecule type" value="mRNA"/>
</dbReference>
<dbReference type="EMBL" id="AK163845">
    <property type="protein sequence ID" value="BAE37516.1"/>
    <property type="molecule type" value="mRNA"/>
</dbReference>
<dbReference type="EMBL" id="AK122238">
    <property type="protein sequence ID" value="BAC65520.2"/>
    <property type="status" value="ALT_INIT"/>
    <property type="molecule type" value="Transcribed_RNA"/>
</dbReference>
<dbReference type="EMBL" id="BC072661">
    <property type="protein sequence ID" value="AAH72661.1"/>
    <property type="molecule type" value="mRNA"/>
</dbReference>
<dbReference type="EMBL" id="BC085183">
    <property type="protein sequence ID" value="AAH85183.1"/>
    <property type="molecule type" value="mRNA"/>
</dbReference>
<dbReference type="EMBL" id="BC089344">
    <property type="protein sequence ID" value="AAH89344.1"/>
    <property type="molecule type" value="mRNA"/>
</dbReference>
<dbReference type="EMBL" id="AF105266">
    <property type="protein sequence ID" value="AAF16868.1"/>
    <property type="molecule type" value="Genomic_DNA"/>
</dbReference>
<dbReference type="EMBL" id="AF105264">
    <property type="protein sequence ID" value="AAF16868.1"/>
    <property type="status" value="JOINED"/>
    <property type="molecule type" value="Genomic_DNA"/>
</dbReference>
<dbReference type="EMBL" id="AF105265">
    <property type="protein sequence ID" value="AAF16868.1"/>
    <property type="status" value="JOINED"/>
    <property type="molecule type" value="Genomic_DNA"/>
</dbReference>
<dbReference type="EMBL" id="U48804">
    <property type="protein sequence ID" value="AAC52770.1"/>
    <property type="status" value="ALT_FRAME"/>
    <property type="molecule type" value="Genomic_DNA"/>
</dbReference>
<dbReference type="CCDS" id="CCDS20783.1">
    <molecule id="Q3URU2-1"/>
</dbReference>
<dbReference type="PIR" id="T14155">
    <property type="entry name" value="T14155"/>
</dbReference>
<dbReference type="PIR" id="T30173">
    <property type="entry name" value="T30173"/>
</dbReference>
<dbReference type="RefSeq" id="NP_001403993.1">
    <molecule id="Q3URU2-1"/>
    <property type="nucleotide sequence ID" value="NM_001417064.1"/>
</dbReference>
<dbReference type="RefSeq" id="NP_001403994.1">
    <molecule id="Q3URU2-1"/>
    <property type="nucleotide sequence ID" value="NM_001417065.1"/>
</dbReference>
<dbReference type="RefSeq" id="NP_001403995.1">
    <molecule id="Q3URU2-1"/>
    <property type="nucleotide sequence ID" value="NM_001417066.1"/>
</dbReference>
<dbReference type="RefSeq" id="NP_001403997.1">
    <molecule id="Q3URU2-1"/>
    <property type="nucleotide sequence ID" value="NM_001417068.1"/>
</dbReference>
<dbReference type="RefSeq" id="NP_001403999.1">
    <molecule id="Q3URU2-1"/>
    <property type="nucleotide sequence ID" value="NM_001417070.1"/>
</dbReference>
<dbReference type="RefSeq" id="NP_032843.2">
    <molecule id="Q3URU2-1"/>
    <property type="nucleotide sequence ID" value="NM_008817.3"/>
</dbReference>
<dbReference type="RefSeq" id="XP_017177520.1">
    <property type="nucleotide sequence ID" value="XM_017322031.1"/>
</dbReference>
<dbReference type="RefSeq" id="XP_017177521.1">
    <property type="nucleotide sequence ID" value="XM_017322032.1"/>
</dbReference>
<dbReference type="RefSeq" id="XP_030098071.1">
    <molecule id="Q3URU2-1"/>
    <property type="nucleotide sequence ID" value="XM_030242211.2"/>
</dbReference>
<dbReference type="RefSeq" id="XP_030098072.1">
    <molecule id="Q3URU2-1"/>
    <property type="nucleotide sequence ID" value="XM_030242212.1"/>
</dbReference>
<dbReference type="RefSeq" id="XP_036008664.1">
    <molecule id="Q3URU2-1"/>
    <property type="nucleotide sequence ID" value="XM_036152771.1"/>
</dbReference>
<dbReference type="RefSeq" id="XP_036008666.1">
    <molecule id="Q3URU2-1"/>
    <property type="nucleotide sequence ID" value="XM_036152773.1"/>
</dbReference>
<dbReference type="RefSeq" id="XP_036008667.1">
    <molecule id="Q3URU2-1"/>
    <property type="nucleotide sequence ID" value="XM_036152774.1"/>
</dbReference>
<dbReference type="BioGRID" id="202106">
    <property type="interactions" value="4"/>
</dbReference>
<dbReference type="FunCoup" id="Q3URU2">
    <property type="interactions" value="424"/>
</dbReference>
<dbReference type="IntAct" id="Q3URU2">
    <property type="interactions" value="1"/>
</dbReference>
<dbReference type="MINT" id="Q3URU2"/>
<dbReference type="STRING" id="10090.ENSMUSP00000050750"/>
<dbReference type="GlyGen" id="Q3URU2">
    <property type="glycosylation" value="1 site, 1 O-linked glycan (1 site)"/>
</dbReference>
<dbReference type="iPTMnet" id="Q3URU2"/>
<dbReference type="PhosphoSitePlus" id="Q3URU2"/>
<dbReference type="PaxDb" id="10090-ENSMUSP00000050750"/>
<dbReference type="PeptideAtlas" id="Q3URU2"/>
<dbReference type="ProteomicsDB" id="287822">
    <molecule id="Q3URU2-1"/>
</dbReference>
<dbReference type="ProteomicsDB" id="287823">
    <molecule id="Q3URU2-2"/>
</dbReference>
<dbReference type="Pumba" id="Q3URU2"/>
<dbReference type="Antibodypedia" id="19625">
    <property type="antibodies" value="184 antibodies from 24 providers"/>
</dbReference>
<dbReference type="DNASU" id="18616"/>
<dbReference type="Ensembl" id="ENSMUST00000051209.11">
    <molecule id="Q3URU2-1"/>
    <property type="protein sequence ID" value="ENSMUSP00000050750.5"/>
    <property type="gene ID" value="ENSMUSG00000002265.18"/>
</dbReference>
<dbReference type="GeneID" id="18616"/>
<dbReference type="KEGG" id="mmu:18616"/>
<dbReference type="UCSC" id="uc009fbw.1">
    <molecule id="Q3URU2-1"/>
    <property type="organism name" value="mouse"/>
</dbReference>
<dbReference type="AGR" id="MGI:104748"/>
<dbReference type="CTD" id="5178"/>
<dbReference type="MGI" id="MGI:104748">
    <property type="gene designation" value="Peg3"/>
</dbReference>
<dbReference type="VEuPathDB" id="HostDB:ENSMUSG00000002265"/>
<dbReference type="eggNOG" id="KOG1721">
    <property type="taxonomic scope" value="Eukaryota"/>
</dbReference>
<dbReference type="GeneTree" id="ENSGT00940000162525"/>
<dbReference type="HOGENOM" id="CLU_005305_0_0_1"/>
<dbReference type="InParanoid" id="Q3URU2"/>
<dbReference type="PhylomeDB" id="Q3URU2"/>
<dbReference type="TreeFam" id="TF337075"/>
<dbReference type="BioGRID-ORCS" id="18616">
    <property type="hits" value="3 hits in 79 CRISPR screens"/>
</dbReference>
<dbReference type="ChiTaRS" id="Peg3">
    <property type="organism name" value="mouse"/>
</dbReference>
<dbReference type="PRO" id="PR:Q3URU2"/>
<dbReference type="Proteomes" id="UP000000589">
    <property type="component" value="Chromosome 7"/>
</dbReference>
<dbReference type="RNAct" id="Q3URU2">
    <property type="molecule type" value="protein"/>
</dbReference>
<dbReference type="Bgee" id="ENSMUSG00000002265">
    <property type="expression patterns" value="Expressed in humerus cartilage element and 273 other cell types or tissues"/>
</dbReference>
<dbReference type="ExpressionAtlas" id="Q3URU2">
    <property type="expression patterns" value="baseline and differential"/>
</dbReference>
<dbReference type="GO" id="GO:0005776">
    <property type="term" value="C:autophagosome"/>
    <property type="evidence" value="ECO:0000314"/>
    <property type="project" value="MGI"/>
</dbReference>
<dbReference type="GO" id="GO:0005634">
    <property type="term" value="C:nucleus"/>
    <property type="evidence" value="ECO:0000314"/>
    <property type="project" value="UniProtKB"/>
</dbReference>
<dbReference type="GO" id="GO:0008270">
    <property type="term" value="F:zinc ion binding"/>
    <property type="evidence" value="ECO:0007669"/>
    <property type="project" value="UniProtKB-KW"/>
</dbReference>
<dbReference type="GO" id="GO:0006915">
    <property type="term" value="P:apoptotic process"/>
    <property type="evidence" value="ECO:0007669"/>
    <property type="project" value="UniProtKB-KW"/>
</dbReference>
<dbReference type="GO" id="GO:0000122">
    <property type="term" value="P:negative regulation of transcription by RNA polymerase II"/>
    <property type="evidence" value="ECO:0000315"/>
    <property type="project" value="MGI"/>
</dbReference>
<dbReference type="GO" id="GO:0045944">
    <property type="term" value="P:positive regulation of transcription by RNA polymerase II"/>
    <property type="evidence" value="ECO:0000316"/>
    <property type="project" value="MGI"/>
</dbReference>
<dbReference type="GO" id="GO:0010468">
    <property type="term" value="P:regulation of gene expression"/>
    <property type="evidence" value="ECO:0000315"/>
    <property type="project" value="MGI"/>
</dbReference>
<dbReference type="FunFam" id="3.30.160.60:FF:001840">
    <property type="entry name" value="Paternally-expressed gene 3 protein"/>
    <property type="match status" value="1"/>
</dbReference>
<dbReference type="FunFam" id="3.30.160.60:FF:003286">
    <property type="entry name" value="Paternally-expressed gene 3 protein"/>
    <property type="match status" value="1"/>
</dbReference>
<dbReference type="FunFam" id="3.30.160.60:FF:001328">
    <property type="entry name" value="paternally-expressed gene 3 protein"/>
    <property type="match status" value="1"/>
</dbReference>
<dbReference type="FunFam" id="3.30.160.60:FF:002140">
    <property type="entry name" value="paternally-expressed gene 3 protein"/>
    <property type="match status" value="1"/>
</dbReference>
<dbReference type="FunFam" id="3.30.160.60:FF:003246">
    <property type="entry name" value="paternally-expressed gene 3 protein isoform X1"/>
    <property type="match status" value="2"/>
</dbReference>
<dbReference type="FunFam" id="3.30.160.60:FF:000661">
    <property type="entry name" value="paternally-expressed gene 3 protein-like"/>
    <property type="match status" value="1"/>
</dbReference>
<dbReference type="Gene3D" id="3.30.160.60">
    <property type="entry name" value="Classic Zinc Finger"/>
    <property type="match status" value="9"/>
</dbReference>
<dbReference type="InterPro" id="IPR036236">
    <property type="entry name" value="Znf_C2H2_sf"/>
</dbReference>
<dbReference type="InterPro" id="IPR013087">
    <property type="entry name" value="Znf_C2H2_type"/>
</dbReference>
<dbReference type="PANTHER" id="PTHR24381:SF293">
    <property type="entry name" value="PATERNALLY-EXPRESSED GENE 3 PROTEIN"/>
    <property type="match status" value="1"/>
</dbReference>
<dbReference type="PANTHER" id="PTHR24381">
    <property type="entry name" value="ZINC FINGER PROTEIN"/>
    <property type="match status" value="1"/>
</dbReference>
<dbReference type="Pfam" id="PF00096">
    <property type="entry name" value="zf-C2H2"/>
    <property type="match status" value="7"/>
</dbReference>
<dbReference type="Pfam" id="PF13912">
    <property type="entry name" value="zf-C2H2_6"/>
    <property type="match status" value="1"/>
</dbReference>
<dbReference type="SMART" id="SM00355">
    <property type="entry name" value="ZnF_C2H2"/>
    <property type="match status" value="12"/>
</dbReference>
<dbReference type="SUPFAM" id="SSF57667">
    <property type="entry name" value="beta-beta-alpha zinc fingers"/>
    <property type="match status" value="7"/>
</dbReference>
<dbReference type="PROSITE" id="PS00028">
    <property type="entry name" value="ZINC_FINGER_C2H2_1"/>
    <property type="match status" value="11"/>
</dbReference>
<dbReference type="PROSITE" id="PS50157">
    <property type="entry name" value="ZINC_FINGER_C2H2_2"/>
    <property type="match status" value="12"/>
</dbReference>
<keyword id="KW-0025">Alternative splicing</keyword>
<keyword id="KW-0053">Apoptosis</keyword>
<keyword id="KW-0963">Cytoplasm</keyword>
<keyword id="KW-0479">Metal-binding</keyword>
<keyword id="KW-0539">Nucleus</keyword>
<keyword id="KW-1185">Reference proteome</keyword>
<keyword id="KW-0677">Repeat</keyword>
<keyword id="KW-0862">Zinc</keyword>
<keyword id="KW-0863">Zinc-finger</keyword>
<evidence type="ECO:0000250" key="1"/>
<evidence type="ECO:0000255" key="2">
    <source>
        <dbReference type="PROSITE-ProRule" id="PRU00042"/>
    </source>
</evidence>
<evidence type="ECO:0000256" key="3">
    <source>
        <dbReference type="SAM" id="MobiDB-lite"/>
    </source>
</evidence>
<evidence type="ECO:0000269" key="4">
    <source>
    </source>
</evidence>
<evidence type="ECO:0000269" key="5">
    <source>
    </source>
</evidence>
<evidence type="ECO:0000269" key="6">
    <source>
    </source>
</evidence>
<evidence type="ECO:0000269" key="7">
    <source>
    </source>
</evidence>
<evidence type="ECO:0000269" key="8">
    <source>
    </source>
</evidence>
<evidence type="ECO:0000269" key="9">
    <source>
    </source>
</evidence>
<evidence type="ECO:0000269" key="10">
    <source>
    </source>
</evidence>
<evidence type="ECO:0000269" key="11">
    <source>
    </source>
</evidence>
<evidence type="ECO:0000303" key="12">
    <source>
    </source>
</evidence>
<evidence type="ECO:0000305" key="13"/>
<gene>
    <name type="primary">Peg3</name>
    <name type="synonym">Kiaa0287</name>
    <name type="synonym">Pw1</name>
</gene>